<feature type="chain" id="PRO_1000085341" description="Curved DNA-binding protein">
    <location>
        <begin position="1"/>
        <end position="306"/>
    </location>
</feature>
<feature type="domain" description="J" evidence="1">
    <location>
        <begin position="5"/>
        <end position="69"/>
    </location>
</feature>
<dbReference type="EMBL" id="CP000880">
    <property type="protein sequence ID" value="ABX21772.1"/>
    <property type="molecule type" value="Genomic_DNA"/>
</dbReference>
<dbReference type="BMRB" id="A9MH53"/>
<dbReference type="SMR" id="A9MH53"/>
<dbReference type="STRING" id="41514.SARI_01889"/>
<dbReference type="KEGG" id="ses:SARI_01889"/>
<dbReference type="HOGENOM" id="CLU_017633_0_0_6"/>
<dbReference type="Proteomes" id="UP000002084">
    <property type="component" value="Chromosome"/>
</dbReference>
<dbReference type="GO" id="GO:0005737">
    <property type="term" value="C:cytoplasm"/>
    <property type="evidence" value="ECO:0007669"/>
    <property type="project" value="UniProtKB-UniRule"/>
</dbReference>
<dbReference type="GO" id="GO:0009295">
    <property type="term" value="C:nucleoid"/>
    <property type="evidence" value="ECO:0007669"/>
    <property type="project" value="UniProtKB-SubCell"/>
</dbReference>
<dbReference type="GO" id="GO:0003681">
    <property type="term" value="F:bent DNA binding"/>
    <property type="evidence" value="ECO:0007669"/>
    <property type="project" value="UniProtKB-UniRule"/>
</dbReference>
<dbReference type="GO" id="GO:0051082">
    <property type="term" value="F:unfolded protein binding"/>
    <property type="evidence" value="ECO:0007669"/>
    <property type="project" value="InterPro"/>
</dbReference>
<dbReference type="GO" id="GO:0051085">
    <property type="term" value="P:chaperone cofactor-dependent protein refolding"/>
    <property type="evidence" value="ECO:0007669"/>
    <property type="project" value="TreeGrafter"/>
</dbReference>
<dbReference type="GO" id="GO:0042026">
    <property type="term" value="P:protein refolding"/>
    <property type="evidence" value="ECO:0007669"/>
    <property type="project" value="TreeGrafter"/>
</dbReference>
<dbReference type="CDD" id="cd06257">
    <property type="entry name" value="DnaJ"/>
    <property type="match status" value="1"/>
</dbReference>
<dbReference type="CDD" id="cd10747">
    <property type="entry name" value="DnaJ_C"/>
    <property type="match status" value="1"/>
</dbReference>
<dbReference type="FunFam" id="1.10.287.110:FF:000013">
    <property type="entry name" value="Curved DNA-binding protein"/>
    <property type="match status" value="1"/>
</dbReference>
<dbReference type="FunFam" id="2.60.260.20:FF:000008">
    <property type="entry name" value="Curved DNA-binding protein"/>
    <property type="match status" value="1"/>
</dbReference>
<dbReference type="Gene3D" id="1.10.287.110">
    <property type="entry name" value="DnaJ domain"/>
    <property type="match status" value="1"/>
</dbReference>
<dbReference type="Gene3D" id="1.20.5.460">
    <property type="entry name" value="Single helix bin"/>
    <property type="match status" value="1"/>
</dbReference>
<dbReference type="Gene3D" id="2.60.260.20">
    <property type="entry name" value="Urease metallochaperone UreE, N-terminal domain"/>
    <property type="match status" value="2"/>
</dbReference>
<dbReference type="HAMAP" id="MF_01154">
    <property type="entry name" value="CbpA"/>
    <property type="match status" value="1"/>
</dbReference>
<dbReference type="InterPro" id="IPR023859">
    <property type="entry name" value="DNA-bd_curved-DNA"/>
</dbReference>
<dbReference type="InterPro" id="IPR002939">
    <property type="entry name" value="DnaJ_C"/>
</dbReference>
<dbReference type="InterPro" id="IPR001623">
    <property type="entry name" value="DnaJ_domain"/>
</dbReference>
<dbReference type="InterPro" id="IPR018253">
    <property type="entry name" value="DnaJ_domain_CS"/>
</dbReference>
<dbReference type="InterPro" id="IPR008971">
    <property type="entry name" value="HSP40/DnaJ_pept-bd"/>
</dbReference>
<dbReference type="InterPro" id="IPR036869">
    <property type="entry name" value="J_dom_sf"/>
</dbReference>
<dbReference type="NCBIfam" id="NF007618">
    <property type="entry name" value="PRK10266.1"/>
    <property type="match status" value="1"/>
</dbReference>
<dbReference type="PANTHER" id="PTHR43096">
    <property type="entry name" value="DNAJ HOMOLOG 1, MITOCHONDRIAL-RELATED"/>
    <property type="match status" value="1"/>
</dbReference>
<dbReference type="PANTHER" id="PTHR43096:SF52">
    <property type="entry name" value="DNAJ HOMOLOG 1, MITOCHONDRIAL-RELATED"/>
    <property type="match status" value="1"/>
</dbReference>
<dbReference type="Pfam" id="PF00226">
    <property type="entry name" value="DnaJ"/>
    <property type="match status" value="1"/>
</dbReference>
<dbReference type="Pfam" id="PF01556">
    <property type="entry name" value="DnaJ_C"/>
    <property type="match status" value="1"/>
</dbReference>
<dbReference type="PRINTS" id="PR00625">
    <property type="entry name" value="JDOMAIN"/>
</dbReference>
<dbReference type="SMART" id="SM00271">
    <property type="entry name" value="DnaJ"/>
    <property type="match status" value="1"/>
</dbReference>
<dbReference type="SUPFAM" id="SSF46565">
    <property type="entry name" value="Chaperone J-domain"/>
    <property type="match status" value="1"/>
</dbReference>
<dbReference type="SUPFAM" id="SSF49493">
    <property type="entry name" value="HSP40/DnaJ peptide-binding domain"/>
    <property type="match status" value="2"/>
</dbReference>
<dbReference type="PROSITE" id="PS00636">
    <property type="entry name" value="DNAJ_1"/>
    <property type="match status" value="1"/>
</dbReference>
<dbReference type="PROSITE" id="PS50076">
    <property type="entry name" value="DNAJ_2"/>
    <property type="match status" value="1"/>
</dbReference>
<protein>
    <recommendedName>
        <fullName evidence="1">Curved DNA-binding protein</fullName>
    </recommendedName>
</protein>
<organism>
    <name type="scientific">Salmonella arizonae (strain ATCC BAA-731 / CDC346-86 / RSK2980)</name>
    <dbReference type="NCBI Taxonomy" id="41514"/>
    <lineage>
        <taxon>Bacteria</taxon>
        <taxon>Pseudomonadati</taxon>
        <taxon>Pseudomonadota</taxon>
        <taxon>Gammaproteobacteria</taxon>
        <taxon>Enterobacterales</taxon>
        <taxon>Enterobacteriaceae</taxon>
        <taxon>Salmonella</taxon>
    </lineage>
</organism>
<gene>
    <name evidence="1" type="primary">cbpA</name>
    <name type="ordered locus">SARI_01889</name>
</gene>
<proteinExistence type="inferred from homology"/>
<accession>A9MH53</accession>
<evidence type="ECO:0000255" key="1">
    <source>
        <dbReference type="HAMAP-Rule" id="MF_01154"/>
    </source>
</evidence>
<sequence>MELKDYYAIMGVKPTDDLKTIKTAYRRLARKYHPDVSKEPDAEARFKEVAEAWEVLSDEQRRAEYDQLWQHRNDPQFNRQFQQHEGQPYNAEDFDDIFSSIFGQHGRHSHHRHAARGHDIEIEVAVFLEETLEEHQRTISYSVPVYNAFGLVEREIPRTLNVKIPAGVSNGQRIRLKGQGTPGENGGPNGDLWLVIHIAPHPLFDIVNQDLEVVLPLAPWEAALGAKVSVPTLKERILLTIPPGSQAGQRLRIKGKGLASKKHTGDLYAVIKIVMPPKPDEKTAALWQQLADAQSSFDPRQQWGKA</sequence>
<reference key="1">
    <citation type="submission" date="2007-11" db="EMBL/GenBank/DDBJ databases">
        <authorList>
            <consortium name="The Salmonella enterica serovar Arizonae Genome Sequencing Project"/>
            <person name="McClelland M."/>
            <person name="Sanderson E.K."/>
            <person name="Porwollik S."/>
            <person name="Spieth J."/>
            <person name="Clifton W.S."/>
            <person name="Fulton R."/>
            <person name="Chunyan W."/>
            <person name="Wollam A."/>
            <person name="Shah N."/>
            <person name="Pepin K."/>
            <person name="Bhonagiri V."/>
            <person name="Nash W."/>
            <person name="Johnson M."/>
            <person name="Thiruvilangam P."/>
            <person name="Wilson R."/>
        </authorList>
    </citation>
    <scope>NUCLEOTIDE SEQUENCE [LARGE SCALE GENOMIC DNA]</scope>
    <source>
        <strain>ATCC BAA-731 / CDC346-86 / RSK2980</strain>
    </source>
</reference>
<name>CBPA_SALAR</name>
<keyword id="KW-0143">Chaperone</keyword>
<keyword id="KW-0963">Cytoplasm</keyword>
<keyword id="KW-0238">DNA-binding</keyword>
<keyword id="KW-1185">Reference proteome</keyword>
<comment type="function">
    <text evidence="1">DNA-binding protein that preferentially recognizes a curved DNA sequence. It is probably a functional analog of DnaJ; displays overlapping activities with DnaJ, but functions under different conditions, probably acting as a molecular chaperone in an adaptive response to environmental stresses other than heat shock. Lacks autonomous chaperone activity; binds native substrates and targets them for recognition by DnaK. Its activity is inhibited by the binding of CbpM.</text>
</comment>
<comment type="subcellular location">
    <subcellularLocation>
        <location evidence="1">Cytoplasm</location>
        <location evidence="1">Nucleoid</location>
    </subcellularLocation>
</comment>